<organism>
    <name type="scientific">Escherichia coli (strain K12)</name>
    <dbReference type="NCBI Taxonomy" id="83333"/>
    <lineage>
        <taxon>Bacteria</taxon>
        <taxon>Pseudomonadati</taxon>
        <taxon>Pseudomonadota</taxon>
        <taxon>Gammaproteobacteria</taxon>
        <taxon>Enterobacterales</taxon>
        <taxon>Enterobacteriaceae</taxon>
        <taxon>Escherichia</taxon>
    </lineage>
</organism>
<sequence length="326" mass="37851">MSHQLTFADSEFSSKRRQTRKEIFLSRMEQILPWQNMVEVIEPFYPKAGNGRRPYPLETMLRIHCMQHWYNLSDGAMEDALYEIASMRLFARLSLDSALPDRTTIMNFRHLLEQHQLARQLFKTINRWLAEAGVMMTQGTLVDATIIEAPSSTKNKEQQRDPEMHQTKKGNQWHFGMKAHIGVDAKSGLTHSLVTTAANEHDLNQLGNLLHGEEQFVSADAGYQGAPQREELAEVDVDWLIAERPGKVRTLKQHPRKNKTAINIEYMKASIRARVEHPFRIIKRQFGFVKARYKGLLKNDNQLAMLFTLANLFRADQMIRQWERSH</sequence>
<proteinExistence type="inferred from homology"/>
<protein>
    <recommendedName>
        <fullName>Transposase InsH for insertion sequence element IS5I</fullName>
    </recommendedName>
</protein>
<dbReference type="EMBL" id="U00096">
    <property type="protein sequence ID" value="AAC75091.2"/>
    <property type="molecule type" value="Genomic_DNA"/>
</dbReference>
<dbReference type="EMBL" id="AP009048">
    <property type="protein sequence ID" value="BAA15871.1"/>
    <property type="status" value="ALT_INIT"/>
    <property type="molecule type" value="Genomic_DNA"/>
</dbReference>
<dbReference type="RefSeq" id="NP_414793.1">
    <property type="nucleotide sequence ID" value="NC_000913.3"/>
</dbReference>
<dbReference type="RefSeq" id="NP_415084.1">
    <property type="nucleotide sequence ID" value="NC_000913.3"/>
</dbReference>
<dbReference type="RefSeq" id="NP_415189.1">
    <property type="nucleotide sequence ID" value="NC_000913.3"/>
</dbReference>
<dbReference type="RefSeq" id="NP_415847.1">
    <property type="nucleotide sequence ID" value="NC_000913.3"/>
</dbReference>
<dbReference type="RefSeq" id="NP_416535.1">
    <property type="nucleotide sequence ID" value="NC_000913.3"/>
</dbReference>
<dbReference type="RefSeq" id="NP_416696.1">
    <property type="nucleotide sequence ID" value="NC_000913.3"/>
</dbReference>
<dbReference type="RefSeq" id="NP_417456.1">
    <property type="nucleotide sequence ID" value="NC_000913.3"/>
</dbReference>
<dbReference type="RefSeq" id="NP_417685.1">
    <property type="nucleotide sequence ID" value="NC_000913.3"/>
</dbReference>
<dbReference type="RefSeq" id="NP_417962.1">
    <property type="nucleotide sequence ID" value="NC_000913.3"/>
</dbReference>
<dbReference type="RefSeq" id="WP_000019403.1">
    <property type="nucleotide sequence ID" value="NZ_SSZK01000120.1"/>
</dbReference>
<dbReference type="FunCoup" id="P0CE54">
    <property type="interactions" value="11"/>
</dbReference>
<dbReference type="jPOST" id="P0CE54"/>
<dbReference type="EnsemblBacteria" id="AAC75091">
    <property type="protein sequence ID" value="AAC75091"/>
    <property type="gene ID" value="b2030"/>
</dbReference>
<dbReference type="GeneID" id="946577"/>
<dbReference type="KEGG" id="ecj:JW2014"/>
<dbReference type="KEGG" id="eco:b0259"/>
<dbReference type="KEGG" id="eco:b0552"/>
<dbReference type="KEGG" id="eco:b0656"/>
<dbReference type="KEGG" id="eco:b2030"/>
<dbReference type="KEGG" id="eco:b2192"/>
<dbReference type="KEGG" id="eco:b2982"/>
<dbReference type="KEGG" id="eco:b3218"/>
<dbReference type="KEGG" id="eco:b3505"/>
<dbReference type="KEGG" id="eco:b4711"/>
<dbReference type="KEGG" id="ecoc:C3026_01250"/>
<dbReference type="KEGG" id="ecoc:C3026_02730"/>
<dbReference type="KEGG" id="ecoc:C3026_03280"/>
<dbReference type="KEGG" id="ecoc:C3026_07795"/>
<dbReference type="KEGG" id="ecoc:C3026_10760"/>
<dbReference type="KEGG" id="ecoc:C3026_11440"/>
<dbReference type="KEGG" id="ecoc:C3026_12250"/>
<dbReference type="KEGG" id="ecoc:C3026_16315"/>
<dbReference type="KEGG" id="ecoc:C3026_17505"/>
<dbReference type="KEGG" id="ecoc:C3026_18985"/>
<dbReference type="KEGG" id="ecoc:C3026_23975"/>
<dbReference type="EchoBASE" id="EB4733"/>
<dbReference type="HOGENOM" id="CLU_049873_1_2_6"/>
<dbReference type="InParanoid" id="P0CE54"/>
<dbReference type="PhylomeDB" id="P0CE54"/>
<dbReference type="BioCyc" id="EcoCyc:MONOMER0-4237"/>
<dbReference type="PRO" id="PR:P0CE54"/>
<dbReference type="Proteomes" id="UP000000625">
    <property type="component" value="Chromosome"/>
</dbReference>
<dbReference type="GO" id="GO:0005829">
    <property type="term" value="C:cytosol"/>
    <property type="evidence" value="ECO:0000318"/>
    <property type="project" value="GO_Central"/>
</dbReference>
<dbReference type="GO" id="GO:0003677">
    <property type="term" value="F:DNA binding"/>
    <property type="evidence" value="ECO:0007669"/>
    <property type="project" value="UniProtKB-KW"/>
</dbReference>
<dbReference type="GO" id="GO:0004803">
    <property type="term" value="F:transposase activity"/>
    <property type="evidence" value="ECO:0000318"/>
    <property type="project" value="GO_Central"/>
</dbReference>
<dbReference type="GO" id="GO:0006313">
    <property type="term" value="P:DNA transposition"/>
    <property type="evidence" value="ECO:0000318"/>
    <property type="project" value="GO_Central"/>
</dbReference>
<dbReference type="InterPro" id="IPR047959">
    <property type="entry name" value="Transpos_IS5"/>
</dbReference>
<dbReference type="InterPro" id="IPR002559">
    <property type="entry name" value="Transposase_11"/>
</dbReference>
<dbReference type="InterPro" id="IPR008490">
    <property type="entry name" value="Transposase_InsH_N"/>
</dbReference>
<dbReference type="NCBIfam" id="NF033581">
    <property type="entry name" value="transpos_IS5_4"/>
    <property type="match status" value="1"/>
</dbReference>
<dbReference type="PANTHER" id="PTHR35604">
    <property type="entry name" value="TRANSPOSASE INSH FOR INSERTION SEQUENCE ELEMENT IS5A-RELATED"/>
    <property type="match status" value="1"/>
</dbReference>
<dbReference type="PANTHER" id="PTHR35604:SF2">
    <property type="entry name" value="TRANSPOSASE INSH FOR INSERTION SEQUENCE ELEMENT IS5A-RELATED"/>
    <property type="match status" value="1"/>
</dbReference>
<dbReference type="Pfam" id="PF01609">
    <property type="entry name" value="DDE_Tnp_1"/>
    <property type="match status" value="1"/>
</dbReference>
<dbReference type="Pfam" id="PF05598">
    <property type="entry name" value="DUF772"/>
    <property type="match status" value="1"/>
</dbReference>
<feature type="chain" id="PRO_0000392485" description="Transposase InsH for insertion sequence element IS5I">
    <location>
        <begin position="1"/>
        <end position="326"/>
    </location>
</feature>
<name>INSH7_ECOLI</name>
<evidence type="ECO:0000305" key="1"/>
<comment type="function">
    <text>Involved in the transposition of the insertion sequence IS5.</text>
</comment>
<comment type="similarity">
    <text evidence="1">Belongs to the transposase 11 family.</text>
</comment>
<comment type="sequence caution" evidence="1">
    <conflict type="erroneous initiation">
        <sequence resource="EMBL-CDS" id="BAA15871"/>
    </conflict>
    <text>Extended N-terminus.</text>
</comment>
<gene>
    <name type="primary">insH7</name>
    <name type="ordered locus">b2030</name>
    <name type="ordered locus">JW2014</name>
</gene>
<accession>P0CE54</accession>
<accession>O07987</accession>
<accession>O07988</accession>
<accession>P03837</accession>
<accession>P76355</accession>
<accession>Q2MBK1</accession>
<accession>Q2MBM8</accession>
<reference key="1">
    <citation type="journal article" date="1994" name="Nucleic Acids Res.">
        <title>Analysis of the Escherichia coli genome. V. DNA sequence of the region from 76.0 to 81.5 minutes.</title>
        <authorList>
            <person name="Sofia H.J."/>
            <person name="Burland V."/>
            <person name="Daniels D.L."/>
            <person name="Plunkett G. III"/>
            <person name="Blattner F.R."/>
        </authorList>
    </citation>
    <scope>NUCLEOTIDE SEQUENCE [LARGE SCALE GENOMIC DNA]</scope>
    <source>
        <strain>K12 / MG1655 / ATCC 47076</strain>
    </source>
</reference>
<reference key="2">
    <citation type="journal article" date="1996" name="DNA Res.">
        <title>A 570-kb DNA sequence of the Escherichia coli K-12 genome corresponding to the 28.0-40.1 min region on the linkage map.</title>
        <authorList>
            <person name="Aiba H."/>
            <person name="Baba T."/>
            <person name="Fujita K."/>
            <person name="Hayashi K."/>
            <person name="Inada T."/>
            <person name="Isono K."/>
            <person name="Itoh T."/>
            <person name="Kasai H."/>
            <person name="Kashimoto K."/>
            <person name="Kimura S."/>
            <person name="Kitakawa M."/>
            <person name="Kitagawa M."/>
            <person name="Makino K."/>
            <person name="Miki T."/>
            <person name="Mizobuchi K."/>
            <person name="Mori H."/>
            <person name="Mori T."/>
            <person name="Motomura K."/>
            <person name="Nakade S."/>
            <person name="Nakamura Y."/>
            <person name="Nashimoto H."/>
            <person name="Nishio Y."/>
            <person name="Oshima T."/>
            <person name="Saito N."/>
            <person name="Sampei G."/>
            <person name="Seki Y."/>
            <person name="Sivasundaram S."/>
            <person name="Tagami H."/>
            <person name="Takeda J."/>
            <person name="Takemoto K."/>
            <person name="Takeuchi Y."/>
            <person name="Wada C."/>
            <person name="Yamamoto Y."/>
            <person name="Horiuchi T."/>
        </authorList>
    </citation>
    <scope>NUCLEOTIDE SEQUENCE [LARGE SCALE GENOMIC DNA]</scope>
    <source>
        <strain>K12 / W3110 / ATCC 27325 / DSM 5911</strain>
    </source>
</reference>
<reference key="3">
    <citation type="journal article" date="1996" name="DNA Res.">
        <title>A 460-kb DNA sequence of the Escherichia coli K-12 genome corresponding to the 40.1-50.0 min region on the linkage map.</title>
        <authorList>
            <person name="Itoh T."/>
            <person name="Aiba H."/>
            <person name="Baba T."/>
            <person name="Fujita K."/>
            <person name="Hayashi K."/>
            <person name="Inada T."/>
            <person name="Isono K."/>
            <person name="Kasai H."/>
            <person name="Kimura S."/>
            <person name="Kitakawa M."/>
            <person name="Kitagawa M."/>
            <person name="Makino K."/>
            <person name="Miki T."/>
            <person name="Mizobuchi K."/>
            <person name="Mori H."/>
            <person name="Mori T."/>
            <person name="Motomura K."/>
            <person name="Nakade S."/>
            <person name="Nakamura Y."/>
            <person name="Nashimoto H."/>
            <person name="Nishio Y."/>
            <person name="Oshima T."/>
            <person name="Saito N."/>
            <person name="Sampei G."/>
            <person name="Seki Y."/>
            <person name="Sivasundaram S."/>
            <person name="Tagami H."/>
            <person name="Takeda J."/>
            <person name="Takemoto K."/>
            <person name="Wada C."/>
            <person name="Yamamoto Y."/>
            <person name="Horiuchi T."/>
        </authorList>
    </citation>
    <scope>NUCLEOTIDE SEQUENCE [LARGE SCALE GENOMIC DNA]</scope>
    <source>
        <strain>K12 / W3110 / ATCC 27325 / DSM 5911</strain>
    </source>
</reference>
<reference key="4">
    <citation type="submission" date="1997-01" db="EMBL/GenBank/DDBJ databases">
        <title>Sequence of minutes 4-25 of Escherichia coli.</title>
        <authorList>
            <person name="Chung E."/>
            <person name="Allen E."/>
            <person name="Araujo R."/>
            <person name="Aparicio A.M."/>
            <person name="Davis K."/>
            <person name="Duncan M."/>
            <person name="Federspiel N."/>
            <person name="Hyman R."/>
            <person name="Kalman S."/>
            <person name="Komp C."/>
            <person name="Kurdi O."/>
            <person name="Lew H."/>
            <person name="Lin D."/>
            <person name="Namath A."/>
            <person name="Oefner P."/>
            <person name="Roberts D."/>
            <person name="Schramm S."/>
            <person name="Davis R.W."/>
        </authorList>
    </citation>
    <scope>NUCLEOTIDE SEQUENCE [LARGE SCALE GENOMIC DNA]</scope>
    <source>
        <strain>K12 / MG1655 / ATCC 47076</strain>
    </source>
</reference>
<reference key="5">
    <citation type="journal article" date="1997" name="Science">
        <title>The complete genome sequence of Escherichia coli K-12.</title>
        <authorList>
            <person name="Blattner F.R."/>
            <person name="Plunkett G. III"/>
            <person name="Bloch C.A."/>
            <person name="Perna N.T."/>
            <person name="Burland V."/>
            <person name="Riley M."/>
            <person name="Collado-Vides J."/>
            <person name="Glasner J.D."/>
            <person name="Rode C.K."/>
            <person name="Mayhew G.F."/>
            <person name="Gregor J."/>
            <person name="Davis N.W."/>
            <person name="Kirkpatrick H.A."/>
            <person name="Goeden M.A."/>
            <person name="Rose D.J."/>
            <person name="Mau B."/>
            <person name="Shao Y."/>
        </authorList>
    </citation>
    <scope>NUCLEOTIDE SEQUENCE [LARGE SCALE GENOMIC DNA]</scope>
    <source>
        <strain>K12 / MG1655 / ATCC 47076</strain>
    </source>
</reference>
<reference key="6">
    <citation type="journal article" date="2006" name="Mol. Syst. Biol.">
        <title>Highly accurate genome sequences of Escherichia coli K-12 strains MG1655 and W3110.</title>
        <authorList>
            <person name="Hayashi K."/>
            <person name="Morooka N."/>
            <person name="Yamamoto Y."/>
            <person name="Fujita K."/>
            <person name="Isono K."/>
            <person name="Choi S."/>
            <person name="Ohtsubo E."/>
            <person name="Baba T."/>
            <person name="Wanner B.L."/>
            <person name="Mori H."/>
            <person name="Horiuchi T."/>
        </authorList>
    </citation>
    <scope>NUCLEOTIDE SEQUENCE [LARGE SCALE GENOMIC DNA]</scope>
    <source>
        <strain>K12 / W3110 / ATCC 27325 / DSM 5911</strain>
    </source>
</reference>
<keyword id="KW-0233">DNA recombination</keyword>
<keyword id="KW-0238">DNA-binding</keyword>
<keyword id="KW-1185">Reference proteome</keyword>
<keyword id="KW-0814">Transposable element</keyword>
<keyword id="KW-0815">Transposition</keyword>